<gene>
    <name type="primary">OR10A3</name>
</gene>
<accession>P58181</accession>
<accession>B9EH39</accession>
<accession>Q6IF58</accession>
<accession>Q96R11</accession>
<keyword id="KW-1003">Cell membrane</keyword>
<keyword id="KW-1015">Disulfide bond</keyword>
<keyword id="KW-0297">G-protein coupled receptor</keyword>
<keyword id="KW-0325">Glycoprotein</keyword>
<keyword id="KW-0472">Membrane</keyword>
<keyword id="KW-0552">Olfaction</keyword>
<keyword id="KW-0675">Receptor</keyword>
<keyword id="KW-1185">Reference proteome</keyword>
<keyword id="KW-0716">Sensory transduction</keyword>
<keyword id="KW-0807">Transducer</keyword>
<keyword id="KW-0812">Transmembrane</keyword>
<keyword id="KW-1133">Transmembrane helix</keyword>
<name>O10A3_HUMAN</name>
<organism>
    <name type="scientific">Homo sapiens</name>
    <name type="common">Human</name>
    <dbReference type="NCBI Taxonomy" id="9606"/>
    <lineage>
        <taxon>Eukaryota</taxon>
        <taxon>Metazoa</taxon>
        <taxon>Chordata</taxon>
        <taxon>Craniata</taxon>
        <taxon>Vertebrata</taxon>
        <taxon>Euteleostomi</taxon>
        <taxon>Mammalia</taxon>
        <taxon>Eutheria</taxon>
        <taxon>Euarchontoglires</taxon>
        <taxon>Primates</taxon>
        <taxon>Haplorrhini</taxon>
        <taxon>Catarrhini</taxon>
        <taxon>Hominidae</taxon>
        <taxon>Homo</taxon>
    </lineage>
</organism>
<comment type="function">
    <text evidence="3">Odorant receptor.</text>
</comment>
<comment type="subcellular location">
    <subcellularLocation>
        <location>Cell membrane</location>
        <topology>Multi-pass membrane protein</topology>
    </subcellularLocation>
</comment>
<comment type="similarity">
    <text evidence="2">Belongs to the G-protein coupled receptor 1 family.</text>
</comment>
<comment type="online information" name="Human Olfactory Receptor Data Exploratorium (HORDE)">
    <link uri="http://genome.weizmann.ac.il/horde/card/index/symbol:OR10A3"/>
</comment>
<dbReference type="EMBL" id="AB065768">
    <property type="protein sequence ID" value="BAC05988.1"/>
    <property type="molecule type" value="Genomic_DNA"/>
</dbReference>
<dbReference type="EMBL" id="AC044810">
    <property type="status" value="NOT_ANNOTATED_CDS"/>
    <property type="molecule type" value="Genomic_DNA"/>
</dbReference>
<dbReference type="EMBL" id="CH471064">
    <property type="protein sequence ID" value="EAW68641.1"/>
    <property type="molecule type" value="Genomic_DNA"/>
</dbReference>
<dbReference type="EMBL" id="BC137031">
    <property type="protein sequence ID" value="AAI37032.1"/>
    <property type="molecule type" value="mRNA"/>
</dbReference>
<dbReference type="EMBL" id="BC137032">
    <property type="protein sequence ID" value="AAI37033.1"/>
    <property type="molecule type" value="mRNA"/>
</dbReference>
<dbReference type="EMBL" id="AF399634">
    <property type="protein sequence ID" value="AAK95119.1"/>
    <property type="molecule type" value="Genomic_DNA"/>
</dbReference>
<dbReference type="EMBL" id="X64986">
    <property type="status" value="NOT_ANNOTATED_CDS"/>
    <property type="molecule type" value="mRNA"/>
</dbReference>
<dbReference type="EMBL" id="BK004404">
    <property type="protein sequence ID" value="DAA04802.1"/>
    <property type="molecule type" value="Genomic_DNA"/>
</dbReference>
<dbReference type="CCDS" id="CCDS31421.1"/>
<dbReference type="RefSeq" id="NP_001003745.1">
    <property type="nucleotide sequence ID" value="NM_001003745.2"/>
</dbReference>
<dbReference type="SMR" id="P58181"/>
<dbReference type="FunCoup" id="P58181">
    <property type="interactions" value="459"/>
</dbReference>
<dbReference type="STRING" id="9606.ENSP00000493303"/>
<dbReference type="GlyCosmos" id="P58181">
    <property type="glycosylation" value="1 site, No reported glycans"/>
</dbReference>
<dbReference type="GlyGen" id="P58181">
    <property type="glycosylation" value="1 site"/>
</dbReference>
<dbReference type="iPTMnet" id="P58181"/>
<dbReference type="PhosphoSitePlus" id="P58181"/>
<dbReference type="BioMuta" id="OR10A3"/>
<dbReference type="DMDM" id="14423787"/>
<dbReference type="MassIVE" id="P58181"/>
<dbReference type="PaxDb" id="9606-ENSP00000353988"/>
<dbReference type="Antibodypedia" id="55077">
    <property type="antibodies" value="16 antibodies from 11 providers"/>
</dbReference>
<dbReference type="DNASU" id="26496"/>
<dbReference type="Ensembl" id="ENST00000612788.1">
    <property type="protein sequence ID" value="ENSP00000484096.1"/>
    <property type="gene ID" value="ENSG00000273953.1"/>
</dbReference>
<dbReference type="Ensembl" id="ENST00000626843.1">
    <property type="protein sequence ID" value="ENSP00000487530.1"/>
    <property type="gene ID" value="ENSG00000281680.2"/>
</dbReference>
<dbReference type="Ensembl" id="ENST00000641438.1">
    <property type="protein sequence ID" value="ENSP00000493029.1"/>
    <property type="gene ID" value="ENSG00000281680.2"/>
</dbReference>
<dbReference type="Ensembl" id="ENST00000642047.1">
    <property type="protein sequence ID" value="ENSP00000493303.1"/>
    <property type="gene ID" value="ENSG00000170683.7"/>
</dbReference>
<dbReference type="GeneID" id="26496"/>
<dbReference type="KEGG" id="hsa:26496"/>
<dbReference type="MANE-Select" id="ENST00000642047.1">
    <property type="protein sequence ID" value="ENSP00000493303.1"/>
    <property type="RefSeq nucleotide sequence ID" value="NM_001003745.2"/>
    <property type="RefSeq protein sequence ID" value="NP_001003745.1"/>
</dbReference>
<dbReference type="UCSC" id="uc010rbi.3">
    <property type="organism name" value="human"/>
</dbReference>
<dbReference type="AGR" id="HGNC:8162"/>
<dbReference type="CTD" id="26496"/>
<dbReference type="GeneCards" id="OR10A3"/>
<dbReference type="HGNC" id="HGNC:8162">
    <property type="gene designation" value="OR10A3"/>
</dbReference>
<dbReference type="HPA" id="ENSG00000170683">
    <property type="expression patterns" value="Not detected"/>
</dbReference>
<dbReference type="neXtProt" id="NX_P58181"/>
<dbReference type="OpenTargets" id="ENSG00000170683"/>
<dbReference type="PharmGKB" id="PA31951"/>
<dbReference type="VEuPathDB" id="HostDB:ENSG00000170683"/>
<dbReference type="eggNOG" id="ENOG502QVH7">
    <property type="taxonomic scope" value="Eukaryota"/>
</dbReference>
<dbReference type="GeneTree" id="ENSGT01130000278317"/>
<dbReference type="HOGENOM" id="CLU_012526_1_2_1"/>
<dbReference type="InParanoid" id="P58181"/>
<dbReference type="OMA" id="FLKLVMF"/>
<dbReference type="OrthoDB" id="9975554at2759"/>
<dbReference type="PAN-GO" id="P58181">
    <property type="GO annotations" value="1 GO annotation based on evolutionary models"/>
</dbReference>
<dbReference type="PhylomeDB" id="P58181"/>
<dbReference type="TreeFam" id="TF337350"/>
<dbReference type="PathwayCommons" id="P58181"/>
<dbReference type="Reactome" id="R-HSA-9752946">
    <property type="pathway name" value="Expression and translocation of olfactory receptors"/>
</dbReference>
<dbReference type="BioGRID-ORCS" id="26496">
    <property type="hits" value="5 hits in 740 CRISPR screens"/>
</dbReference>
<dbReference type="GeneWiki" id="OR10A3"/>
<dbReference type="GenomeRNAi" id="26496"/>
<dbReference type="Pharos" id="P58181">
    <property type="development level" value="Tdark"/>
</dbReference>
<dbReference type="PRO" id="PR:P58181"/>
<dbReference type="Proteomes" id="UP000005640">
    <property type="component" value="Chromosome 11"/>
</dbReference>
<dbReference type="RNAct" id="P58181">
    <property type="molecule type" value="protein"/>
</dbReference>
<dbReference type="Bgee" id="ENSG00000170683">
    <property type="expression patterns" value="Expressed in skin of leg and 2 other cell types or tissues"/>
</dbReference>
<dbReference type="ExpressionAtlas" id="P58181">
    <property type="expression patterns" value="baseline and differential"/>
</dbReference>
<dbReference type="GO" id="GO:0005886">
    <property type="term" value="C:plasma membrane"/>
    <property type="evidence" value="ECO:0000318"/>
    <property type="project" value="GO_Central"/>
</dbReference>
<dbReference type="GO" id="GO:0004930">
    <property type="term" value="F:G protein-coupled receptor activity"/>
    <property type="evidence" value="ECO:0007669"/>
    <property type="project" value="UniProtKB-KW"/>
</dbReference>
<dbReference type="GO" id="GO:0004984">
    <property type="term" value="F:olfactory receptor activity"/>
    <property type="evidence" value="ECO:0000318"/>
    <property type="project" value="GO_Central"/>
</dbReference>
<dbReference type="GO" id="GO:0050911">
    <property type="term" value="P:detection of chemical stimulus involved in sensory perception of smell"/>
    <property type="evidence" value="ECO:0000318"/>
    <property type="project" value="GO_Central"/>
</dbReference>
<dbReference type="GO" id="GO:0007608">
    <property type="term" value="P:sensory perception of smell"/>
    <property type="evidence" value="ECO:0000303"/>
    <property type="project" value="UniProtKB"/>
</dbReference>
<dbReference type="CDD" id="cd15225">
    <property type="entry name" value="7tmA_OR10A-like"/>
    <property type="match status" value="1"/>
</dbReference>
<dbReference type="FunFam" id="1.20.1070.10:FF:000001">
    <property type="entry name" value="Olfactory receptor"/>
    <property type="match status" value="1"/>
</dbReference>
<dbReference type="Gene3D" id="1.20.1070.10">
    <property type="entry name" value="Rhodopsin 7-helix transmembrane proteins"/>
    <property type="match status" value="1"/>
</dbReference>
<dbReference type="InterPro" id="IPR000276">
    <property type="entry name" value="GPCR_Rhodpsn"/>
</dbReference>
<dbReference type="InterPro" id="IPR017452">
    <property type="entry name" value="GPCR_Rhodpsn_7TM"/>
</dbReference>
<dbReference type="InterPro" id="IPR000725">
    <property type="entry name" value="Olfact_rcpt"/>
</dbReference>
<dbReference type="PANTHER" id="PTHR26453">
    <property type="entry name" value="OLFACTORY RECEPTOR"/>
    <property type="match status" value="1"/>
</dbReference>
<dbReference type="Pfam" id="PF13853">
    <property type="entry name" value="7tm_4"/>
    <property type="match status" value="1"/>
</dbReference>
<dbReference type="PRINTS" id="PR00237">
    <property type="entry name" value="GPCRRHODOPSN"/>
</dbReference>
<dbReference type="PRINTS" id="PR00245">
    <property type="entry name" value="OLFACTORYR"/>
</dbReference>
<dbReference type="SUPFAM" id="SSF81321">
    <property type="entry name" value="Family A G protein-coupled receptor-like"/>
    <property type="match status" value="1"/>
</dbReference>
<dbReference type="PROSITE" id="PS00237">
    <property type="entry name" value="G_PROTEIN_RECEP_F1_1"/>
    <property type="match status" value="1"/>
</dbReference>
<dbReference type="PROSITE" id="PS50262">
    <property type="entry name" value="G_PROTEIN_RECEP_F1_2"/>
    <property type="match status" value="1"/>
</dbReference>
<protein>
    <recommendedName>
        <fullName>Olfactory receptor 10A3</fullName>
    </recommendedName>
    <alternativeName>
        <fullName>HTPCRX12</fullName>
    </alternativeName>
    <alternativeName>
        <fullName>Olfactory receptor OR11-97</fullName>
    </alternativeName>
</protein>
<reference key="1">
    <citation type="submission" date="2001-07" db="EMBL/GenBank/DDBJ databases">
        <title>Genome-wide discovery and analysis of human seven transmembrane helix receptor genes.</title>
        <authorList>
            <person name="Suwa M."/>
            <person name="Sato T."/>
            <person name="Okouchi I."/>
            <person name="Arita M."/>
            <person name="Futami K."/>
            <person name="Matsumoto S."/>
            <person name="Tsutsumi S."/>
            <person name="Aburatani H."/>
            <person name="Asai K."/>
            <person name="Akiyama Y."/>
        </authorList>
    </citation>
    <scope>NUCLEOTIDE SEQUENCE [GENOMIC DNA]</scope>
</reference>
<reference key="2">
    <citation type="journal article" date="2006" name="Nature">
        <title>Human chromosome 11 DNA sequence and analysis including novel gene identification.</title>
        <authorList>
            <person name="Taylor T.D."/>
            <person name="Noguchi H."/>
            <person name="Totoki Y."/>
            <person name="Toyoda A."/>
            <person name="Kuroki Y."/>
            <person name="Dewar K."/>
            <person name="Lloyd C."/>
            <person name="Itoh T."/>
            <person name="Takeda T."/>
            <person name="Kim D.-W."/>
            <person name="She X."/>
            <person name="Barlow K.F."/>
            <person name="Bloom T."/>
            <person name="Bruford E."/>
            <person name="Chang J.L."/>
            <person name="Cuomo C.A."/>
            <person name="Eichler E."/>
            <person name="FitzGerald M.G."/>
            <person name="Jaffe D.B."/>
            <person name="LaButti K."/>
            <person name="Nicol R."/>
            <person name="Park H.-S."/>
            <person name="Seaman C."/>
            <person name="Sougnez C."/>
            <person name="Yang X."/>
            <person name="Zimmer A.R."/>
            <person name="Zody M.C."/>
            <person name="Birren B.W."/>
            <person name="Nusbaum C."/>
            <person name="Fujiyama A."/>
            <person name="Hattori M."/>
            <person name="Rogers J."/>
            <person name="Lander E.S."/>
            <person name="Sakaki Y."/>
        </authorList>
    </citation>
    <scope>NUCLEOTIDE SEQUENCE [LARGE SCALE GENOMIC DNA]</scope>
</reference>
<reference key="3">
    <citation type="submission" date="2005-09" db="EMBL/GenBank/DDBJ databases">
        <authorList>
            <person name="Mural R.J."/>
            <person name="Istrail S."/>
            <person name="Sutton G.G."/>
            <person name="Florea L."/>
            <person name="Halpern A.L."/>
            <person name="Mobarry C.M."/>
            <person name="Lippert R."/>
            <person name="Walenz B."/>
            <person name="Shatkay H."/>
            <person name="Dew I."/>
            <person name="Miller J.R."/>
            <person name="Flanigan M.J."/>
            <person name="Edwards N.J."/>
            <person name="Bolanos R."/>
            <person name="Fasulo D."/>
            <person name="Halldorsson B.V."/>
            <person name="Hannenhalli S."/>
            <person name="Turner R."/>
            <person name="Yooseph S."/>
            <person name="Lu F."/>
            <person name="Nusskern D.R."/>
            <person name="Shue B.C."/>
            <person name="Zheng X.H."/>
            <person name="Zhong F."/>
            <person name="Delcher A.L."/>
            <person name="Huson D.H."/>
            <person name="Kravitz S.A."/>
            <person name="Mouchard L."/>
            <person name="Reinert K."/>
            <person name="Remington K.A."/>
            <person name="Clark A.G."/>
            <person name="Waterman M.S."/>
            <person name="Eichler E.E."/>
            <person name="Adams M.D."/>
            <person name="Hunkapiller M.W."/>
            <person name="Myers E.W."/>
            <person name="Venter J.C."/>
        </authorList>
    </citation>
    <scope>NUCLEOTIDE SEQUENCE [LARGE SCALE GENOMIC DNA]</scope>
</reference>
<reference key="4">
    <citation type="journal article" date="2004" name="Genome Res.">
        <title>The status, quality, and expansion of the NIH full-length cDNA project: the Mammalian Gene Collection (MGC).</title>
        <authorList>
            <consortium name="The MGC Project Team"/>
        </authorList>
    </citation>
    <scope>NUCLEOTIDE SEQUENCE [LARGE SCALE MRNA]</scope>
    <source>
        <tissue>Testis</tissue>
    </source>
</reference>
<reference key="5">
    <citation type="journal article" date="2002" name="Genomics">
        <title>DEFOG: a practical scheme for deciphering families of genes.</title>
        <authorList>
            <person name="Fuchs T."/>
            <person name="Malecova B."/>
            <person name="Linhart C."/>
            <person name="Sharan R."/>
            <person name="Khen M."/>
            <person name="Herwig R."/>
            <person name="Shmulevich D."/>
            <person name="Elkon R."/>
            <person name="Steinfath M."/>
            <person name="O'Brien J.K."/>
            <person name="Radelof U."/>
            <person name="Lehrach H."/>
            <person name="Lancet D."/>
            <person name="Shamir R."/>
        </authorList>
    </citation>
    <scope>NUCLEOTIDE SEQUENCE [GENOMIC DNA] OF 68-284</scope>
</reference>
<reference key="6">
    <citation type="journal article" date="1992" name="Nature">
        <title>Expression of members of the putative olfactory receptor gene family in mammalian germ cells.</title>
        <authorList>
            <person name="Parmentier M."/>
            <person name="Libert F."/>
            <person name="Schurmans S."/>
            <person name="Schiffmann S."/>
            <person name="Lefort A."/>
            <person name="Eggerickx D."/>
            <person name="Ledent C."/>
            <person name="Mollereau C."/>
            <person name="Gerard C."/>
            <person name="Perret J."/>
            <person name="Grootegoed A."/>
            <person name="Vassart G."/>
        </authorList>
    </citation>
    <scope>NUCLEOTIDE SEQUENCE [MRNA] OF 126-239</scope>
    <source>
        <tissue>Testis</tissue>
    </source>
</reference>
<reference key="7">
    <citation type="journal article" date="2004" name="Proc. Natl. Acad. Sci. U.S.A.">
        <title>The human olfactory receptor gene family.</title>
        <authorList>
            <person name="Malnic B."/>
            <person name="Godfrey P.A."/>
            <person name="Buck L.B."/>
        </authorList>
    </citation>
    <scope>IDENTIFICATION</scope>
</reference>
<reference key="8">
    <citation type="journal article" date="2004" name="Proc. Natl. Acad. Sci. U.S.A.">
        <authorList>
            <person name="Malnic B."/>
            <person name="Godfrey P.A."/>
            <person name="Buck L.B."/>
        </authorList>
    </citation>
    <scope>ERRATUM OF PUBMED:14983052</scope>
</reference>
<feature type="chain" id="PRO_0000150685" description="Olfactory receptor 10A3">
    <location>
        <begin position="1"/>
        <end position="314"/>
    </location>
</feature>
<feature type="topological domain" description="Extracellular" evidence="1">
    <location>
        <begin position="1"/>
        <end position="25"/>
    </location>
</feature>
<feature type="transmembrane region" description="Helical; Name=1" evidence="1">
    <location>
        <begin position="26"/>
        <end position="46"/>
    </location>
</feature>
<feature type="topological domain" description="Cytoplasmic" evidence="1">
    <location>
        <begin position="47"/>
        <end position="54"/>
    </location>
</feature>
<feature type="transmembrane region" description="Helical; Name=2" evidence="1">
    <location>
        <begin position="55"/>
        <end position="75"/>
    </location>
</feature>
<feature type="topological domain" description="Extracellular" evidence="1">
    <location>
        <begin position="76"/>
        <end position="99"/>
    </location>
</feature>
<feature type="transmembrane region" description="Helical; Name=3" evidence="1">
    <location>
        <begin position="100"/>
        <end position="120"/>
    </location>
</feature>
<feature type="topological domain" description="Cytoplasmic" evidence="1">
    <location>
        <begin position="121"/>
        <end position="139"/>
    </location>
</feature>
<feature type="transmembrane region" description="Helical; Name=4" evidence="1">
    <location>
        <begin position="140"/>
        <end position="160"/>
    </location>
</feature>
<feature type="topological domain" description="Extracellular" evidence="1">
    <location>
        <begin position="161"/>
        <end position="197"/>
    </location>
</feature>
<feature type="transmembrane region" description="Helical; Name=5" evidence="1">
    <location>
        <begin position="198"/>
        <end position="217"/>
    </location>
</feature>
<feature type="topological domain" description="Cytoplasmic" evidence="1">
    <location>
        <begin position="218"/>
        <end position="237"/>
    </location>
</feature>
<feature type="transmembrane region" description="Helical; Name=6" evidence="1">
    <location>
        <begin position="238"/>
        <end position="258"/>
    </location>
</feature>
<feature type="topological domain" description="Extracellular" evidence="1">
    <location>
        <begin position="259"/>
        <end position="271"/>
    </location>
</feature>
<feature type="transmembrane region" description="Helical; Name=7" evidence="1">
    <location>
        <begin position="272"/>
        <end position="292"/>
    </location>
</feature>
<feature type="topological domain" description="Cytoplasmic" evidence="1">
    <location>
        <begin position="293"/>
        <end position="314"/>
    </location>
</feature>
<feature type="glycosylation site" description="N-linked (GlcNAc...) asparagine" evidence="1">
    <location>
        <position position="5"/>
    </location>
</feature>
<feature type="disulfide bond" evidence="2">
    <location>
        <begin position="97"/>
        <end position="189"/>
    </location>
</feature>
<feature type="sequence variant" id="VAR_053262" description="In dbSNP:rs16934214.">
    <original>F</original>
    <variation>V</variation>
    <location>
        <position position="20"/>
    </location>
</feature>
<evidence type="ECO:0000255" key="1"/>
<evidence type="ECO:0000255" key="2">
    <source>
        <dbReference type="PROSITE-ProRule" id="PRU00521"/>
    </source>
</evidence>
<evidence type="ECO:0000305" key="3"/>
<sequence>MKRQNQSCVVEFILLGFSNFPELQVQLFGVFLVIYVVTLMGNAIITVIISLNQSLHVPMYLFLLNLSVVEVSFSAVITPEMLVVLSTEKTMISFVGCFAQMYFILLFGGTECFLLGAMAYDRFAAICHPLNYPVIMNRGVFMKLVIFSWISGIMVATVQTTWVFSFPFCGPNEINHLFCETPPVLELVCADTFLFEIYAFTGTILIVMVPFLLILLSYIRVLFAILKMPSTTGRQKAFSTCASHLTSVTLFYGTANMTYLQPKSGYSPETKKLISLAYTLLTPLLNPLIYSLRNSEMKRTLIKLWRRKVILHTF</sequence>
<proteinExistence type="evidence at transcript level"/>